<comment type="function">
    <text evidence="1">Formate dehydrogenase allows the bacterium to use formate as major electron donor during anaerobic respiration, when nitrate is used as electron acceptor. The beta subunit FdnH is an electron transfer unit containing 4 iron-sulfur clusters; it serves as a conduit for electrons that are transferred from the formate oxidation site in the alpha subunit (FdnG) to the menaquinone associated with the gamma subunit (FdnI) of formate dehydrogenase-N. Formate dehydrogenase-N is part of a system that generates proton motive force, together with the dissimilatory nitrate reductase (Nar) (By similarity).</text>
</comment>
<comment type="cofactor">
    <cofactor evidence="2">
        <name>[4Fe-4S] cluster</name>
        <dbReference type="ChEBI" id="CHEBI:49883"/>
    </cofactor>
    <text evidence="2">Binds 4 [4Fe-4S] clusters per subunit.</text>
</comment>
<comment type="subunit">
    <text evidence="1">Trimer of heterotrimers, consisting of subunits alpha, beta and gamma.</text>
</comment>
<comment type="subcellular location">
    <subcellularLocation>
        <location evidence="1">Cell inner membrane</location>
        <topology evidence="1">Single-pass membrane protein</topology>
    </subcellularLocation>
</comment>
<comment type="induction">
    <text evidence="1">By nitrate under anaerobic conditions.</text>
</comment>
<dbReference type="EMBL" id="AE005674">
    <property type="protein sequence ID" value="AAN43322.1"/>
    <property type="molecule type" value="Genomic_DNA"/>
</dbReference>
<dbReference type="EMBL" id="AE014073">
    <property type="protein sequence ID" value="AAP17208.1"/>
    <property type="molecule type" value="Genomic_DNA"/>
</dbReference>
<dbReference type="RefSeq" id="NP_707615.1">
    <property type="nucleotide sequence ID" value="NC_004337.2"/>
</dbReference>
<dbReference type="RefSeq" id="WP_001240582.1">
    <property type="nucleotide sequence ID" value="NZ_WPGW01000120.1"/>
</dbReference>
<dbReference type="SMR" id="P0AAJ4"/>
<dbReference type="STRING" id="198214.SF1750"/>
<dbReference type="PaxDb" id="198214-SF1750"/>
<dbReference type="GeneID" id="1024947"/>
<dbReference type="GeneID" id="86859779"/>
<dbReference type="KEGG" id="sfl:SF1750"/>
<dbReference type="KEGG" id="sfx:S1883"/>
<dbReference type="PATRIC" id="fig|198214.7.peg.2073"/>
<dbReference type="HOGENOM" id="CLU_043374_0_3_6"/>
<dbReference type="Proteomes" id="UP000001006">
    <property type="component" value="Chromosome"/>
</dbReference>
<dbReference type="Proteomes" id="UP000002673">
    <property type="component" value="Chromosome"/>
</dbReference>
<dbReference type="GO" id="GO:0005886">
    <property type="term" value="C:plasma membrane"/>
    <property type="evidence" value="ECO:0007669"/>
    <property type="project" value="UniProtKB-SubCell"/>
</dbReference>
<dbReference type="GO" id="GO:0051539">
    <property type="term" value="F:4 iron, 4 sulfur cluster binding"/>
    <property type="evidence" value="ECO:0007669"/>
    <property type="project" value="UniProtKB-KW"/>
</dbReference>
<dbReference type="GO" id="GO:0046872">
    <property type="term" value="F:metal ion binding"/>
    <property type="evidence" value="ECO:0007669"/>
    <property type="project" value="UniProtKB-KW"/>
</dbReference>
<dbReference type="GO" id="GO:0045333">
    <property type="term" value="P:cellular respiration"/>
    <property type="evidence" value="ECO:0007669"/>
    <property type="project" value="InterPro"/>
</dbReference>
<dbReference type="GO" id="GO:0015944">
    <property type="term" value="P:formate oxidation"/>
    <property type="evidence" value="ECO:0007669"/>
    <property type="project" value="InterPro"/>
</dbReference>
<dbReference type="CDD" id="cd10558">
    <property type="entry name" value="FDH-N"/>
    <property type="match status" value="1"/>
</dbReference>
<dbReference type="FunFam" id="1.20.5.480:FF:000001">
    <property type="entry name" value="Formate dehydrogenase iron-sulfur subunit"/>
    <property type="match status" value="1"/>
</dbReference>
<dbReference type="Gene3D" id="3.30.70.20">
    <property type="match status" value="2"/>
</dbReference>
<dbReference type="Gene3D" id="1.20.5.480">
    <property type="entry name" value="Single helix bin"/>
    <property type="match status" value="1"/>
</dbReference>
<dbReference type="InterPro" id="IPR017896">
    <property type="entry name" value="4Fe4S_Fe-S-bd"/>
</dbReference>
<dbReference type="InterPro" id="IPR017900">
    <property type="entry name" value="4Fe4S_Fe_S_CS"/>
</dbReference>
<dbReference type="InterPro" id="IPR051555">
    <property type="entry name" value="FDH_Electron_Transfer_Unit"/>
</dbReference>
<dbReference type="InterPro" id="IPR006470">
    <property type="entry name" value="Formate_DH_bsu_Proteobacteria"/>
</dbReference>
<dbReference type="InterPro" id="IPR038384">
    <property type="entry name" value="Formate_DH_C_sf"/>
</dbReference>
<dbReference type="InterPro" id="IPR014603">
    <property type="entry name" value="Formate_DH_Fe-S_su"/>
</dbReference>
<dbReference type="InterPro" id="IPR015246">
    <property type="entry name" value="Formate_DH_TM"/>
</dbReference>
<dbReference type="NCBIfam" id="TIGR01582">
    <property type="entry name" value="FDH-beta"/>
    <property type="match status" value="1"/>
</dbReference>
<dbReference type="PANTHER" id="PTHR43545">
    <property type="entry name" value="FORMATE DEHYDROGENASE, NITRATE-INDUCIBLE, IRON-SULFUR SUBUNIT"/>
    <property type="match status" value="1"/>
</dbReference>
<dbReference type="PANTHER" id="PTHR43545:SF6">
    <property type="entry name" value="FORMATE DEHYDROGENASE, NITRATE-INDUCIBLE, IRON-SULFUR SUBUNIT"/>
    <property type="match status" value="1"/>
</dbReference>
<dbReference type="Pfam" id="PF13247">
    <property type="entry name" value="Fer4_11"/>
    <property type="match status" value="1"/>
</dbReference>
<dbReference type="Pfam" id="PF12800">
    <property type="entry name" value="Fer4_4"/>
    <property type="match status" value="1"/>
</dbReference>
<dbReference type="Pfam" id="PF09163">
    <property type="entry name" value="Form-deh_trans"/>
    <property type="match status" value="1"/>
</dbReference>
<dbReference type="PIRSF" id="PIRSF036298">
    <property type="entry name" value="FDH_4Fe4S"/>
    <property type="match status" value="1"/>
</dbReference>
<dbReference type="SUPFAM" id="SSF54862">
    <property type="entry name" value="4Fe-4S ferredoxins"/>
    <property type="match status" value="1"/>
</dbReference>
<dbReference type="PROSITE" id="PS00198">
    <property type="entry name" value="4FE4S_FER_1"/>
    <property type="match status" value="1"/>
</dbReference>
<dbReference type="PROSITE" id="PS51379">
    <property type="entry name" value="4FE4S_FER_2"/>
    <property type="match status" value="4"/>
</dbReference>
<keyword id="KW-0004">4Fe-4S</keyword>
<keyword id="KW-0997">Cell inner membrane</keyword>
<keyword id="KW-1003">Cell membrane</keyword>
<keyword id="KW-0249">Electron transport</keyword>
<keyword id="KW-0408">Iron</keyword>
<keyword id="KW-0411">Iron-sulfur</keyword>
<keyword id="KW-0472">Membrane</keyword>
<keyword id="KW-0479">Metal-binding</keyword>
<keyword id="KW-1185">Reference proteome</keyword>
<keyword id="KW-0677">Repeat</keyword>
<keyword id="KW-0812">Transmembrane</keyword>
<keyword id="KW-1133">Transmembrane helix</keyword>
<keyword id="KW-0813">Transport</keyword>
<name>FDNH_SHIFL</name>
<evidence type="ECO:0000250" key="1"/>
<evidence type="ECO:0000250" key="2">
    <source>
        <dbReference type="UniProtKB" id="P0AAJ3"/>
    </source>
</evidence>
<evidence type="ECO:0000255" key="3">
    <source>
        <dbReference type="PROSITE-ProRule" id="PRU00711"/>
    </source>
</evidence>
<organism>
    <name type="scientific">Shigella flexneri</name>
    <dbReference type="NCBI Taxonomy" id="623"/>
    <lineage>
        <taxon>Bacteria</taxon>
        <taxon>Pseudomonadati</taxon>
        <taxon>Pseudomonadota</taxon>
        <taxon>Gammaproteobacteria</taxon>
        <taxon>Enterobacterales</taxon>
        <taxon>Enterobacteriaceae</taxon>
        <taxon>Shigella</taxon>
    </lineage>
</organism>
<protein>
    <recommendedName>
        <fullName>Formate dehydrogenase, nitrate-inducible, iron-sulfur subunit</fullName>
    </recommendedName>
    <alternativeName>
        <fullName>Anaerobic formate dehydrogenase iron-sulfur subunit</fullName>
    </alternativeName>
    <alternativeName>
        <fullName>Formate dehydrogenase-N subunit beta</fullName>
        <shortName>FDH-N subunit beta</shortName>
    </alternativeName>
</protein>
<proteinExistence type="inferred from homology"/>
<reference key="1">
    <citation type="journal article" date="2002" name="Nucleic Acids Res.">
        <title>Genome sequence of Shigella flexneri 2a: insights into pathogenicity through comparison with genomes of Escherichia coli K12 and O157.</title>
        <authorList>
            <person name="Jin Q."/>
            <person name="Yuan Z."/>
            <person name="Xu J."/>
            <person name="Wang Y."/>
            <person name="Shen Y."/>
            <person name="Lu W."/>
            <person name="Wang J."/>
            <person name="Liu H."/>
            <person name="Yang J."/>
            <person name="Yang F."/>
            <person name="Zhang X."/>
            <person name="Zhang J."/>
            <person name="Yang G."/>
            <person name="Wu H."/>
            <person name="Qu D."/>
            <person name="Dong J."/>
            <person name="Sun L."/>
            <person name="Xue Y."/>
            <person name="Zhao A."/>
            <person name="Gao Y."/>
            <person name="Zhu J."/>
            <person name="Kan B."/>
            <person name="Ding K."/>
            <person name="Chen S."/>
            <person name="Cheng H."/>
            <person name="Yao Z."/>
            <person name="He B."/>
            <person name="Chen R."/>
            <person name="Ma D."/>
            <person name="Qiang B."/>
            <person name="Wen Y."/>
            <person name="Hou Y."/>
            <person name="Yu J."/>
        </authorList>
    </citation>
    <scope>NUCLEOTIDE SEQUENCE [LARGE SCALE GENOMIC DNA]</scope>
    <source>
        <strain>301 / Serotype 2a</strain>
    </source>
</reference>
<reference key="2">
    <citation type="journal article" date="2003" name="Infect. Immun.">
        <title>Complete genome sequence and comparative genomics of Shigella flexneri serotype 2a strain 2457T.</title>
        <authorList>
            <person name="Wei J."/>
            <person name="Goldberg M.B."/>
            <person name="Burland V."/>
            <person name="Venkatesan M.M."/>
            <person name="Deng W."/>
            <person name="Fournier G."/>
            <person name="Mayhew G.F."/>
            <person name="Plunkett G. III"/>
            <person name="Rose D.J."/>
            <person name="Darling A."/>
            <person name="Mau B."/>
            <person name="Perna N.T."/>
            <person name="Payne S.M."/>
            <person name="Runyen-Janecky L.J."/>
            <person name="Zhou S."/>
            <person name="Schwartz D.C."/>
            <person name="Blattner F.R."/>
        </authorList>
    </citation>
    <scope>NUCLEOTIDE SEQUENCE [LARGE SCALE GENOMIC DNA]</scope>
    <source>
        <strain>ATCC 700930 / 2457T / Serotype 2a</strain>
    </source>
</reference>
<gene>
    <name type="primary">fdnH</name>
    <name type="ordered locus">SF1750</name>
    <name type="ordered locus">S1883</name>
</gene>
<sequence>MAMETQDIIKRSATNSITPPSQVRDYKAEVAKLIDVSTCIGCKACQVACSEWNDIRDEVGHCVGVYDNPADLSAKSWTVMRFSETEQNGKLEWLIRKDGCMHCEDPGCLKACPSAGAIIQYANGIVDFQSENCIGCGYCIAGCPFNIPRLNKEDNRVYKCTLCVDRVSVGQEPACVKTCPTGAIHFGTKKEMLELAEQRVAKLKARGYEHAGVYNPEGVGGTHVMYVLHHADQPELYHGLPKDPKIDTSVSLWKGALKPLAAAGFIATFAGLIFHYIGIGPNKEVDDDEEDHHE</sequence>
<feature type="chain" id="PRO_0000159248" description="Formate dehydrogenase, nitrate-inducible, iron-sulfur subunit">
    <location>
        <begin position="1"/>
        <end position="294"/>
    </location>
</feature>
<feature type="topological domain" description="Periplasmic" evidence="1">
    <location>
        <begin position="1"/>
        <end position="256"/>
    </location>
</feature>
<feature type="transmembrane region" description="Helical" evidence="1">
    <location>
        <begin position="257"/>
        <end position="279"/>
    </location>
</feature>
<feature type="topological domain" description="Cytoplasmic" evidence="1">
    <location>
        <begin position="280"/>
        <end position="294"/>
    </location>
</feature>
<feature type="domain" description="4Fe-4S ferredoxin-type 1" evidence="3">
    <location>
        <begin position="30"/>
        <end position="58"/>
    </location>
</feature>
<feature type="domain" description="4Fe-4S ferredoxin-type 2" evidence="3">
    <location>
        <begin position="91"/>
        <end position="123"/>
    </location>
</feature>
<feature type="domain" description="4Fe-4S ferredoxin-type 3" evidence="3">
    <location>
        <begin position="124"/>
        <end position="153"/>
    </location>
</feature>
<feature type="domain" description="4Fe-4S ferredoxin-type 4" evidence="3">
    <location>
        <begin position="158"/>
        <end position="189"/>
    </location>
</feature>
<feature type="binding site" evidence="2">
    <location>
        <position position="39"/>
    </location>
    <ligand>
        <name>[4Fe-4S] cluster</name>
        <dbReference type="ChEBI" id="CHEBI:49883"/>
        <label>1</label>
    </ligand>
</feature>
<feature type="binding site" evidence="2">
    <location>
        <position position="42"/>
    </location>
    <ligand>
        <name>[4Fe-4S] cluster</name>
        <dbReference type="ChEBI" id="CHEBI:49883"/>
        <label>1</label>
    </ligand>
</feature>
<feature type="binding site" evidence="2">
    <location>
        <position position="45"/>
    </location>
    <ligand>
        <name>[4Fe-4S] cluster</name>
        <dbReference type="ChEBI" id="CHEBI:49883"/>
        <label>1</label>
    </ligand>
</feature>
<feature type="binding site" evidence="2">
    <location>
        <position position="49"/>
    </location>
    <ligand>
        <name>[4Fe-4S] cluster</name>
        <dbReference type="ChEBI" id="CHEBI:49883"/>
        <label>2</label>
    </ligand>
</feature>
<feature type="binding site" evidence="2">
    <location>
        <position position="100"/>
    </location>
    <ligand>
        <name>[4Fe-4S] cluster</name>
        <dbReference type="ChEBI" id="CHEBI:49883"/>
        <label>3</label>
    </ligand>
</feature>
<feature type="binding site" evidence="2">
    <location>
        <position position="103"/>
    </location>
    <ligand>
        <name>[4Fe-4S] cluster</name>
        <dbReference type="ChEBI" id="CHEBI:49883"/>
        <label>3</label>
    </ligand>
</feature>
<feature type="binding site" evidence="2">
    <location>
        <position position="108"/>
    </location>
    <ligand>
        <name>[4Fe-4S] cluster</name>
        <dbReference type="ChEBI" id="CHEBI:49883"/>
        <label>3</label>
    </ligand>
</feature>
<feature type="binding site" evidence="2">
    <location>
        <position position="112"/>
    </location>
    <ligand>
        <name>[4Fe-4S] cluster</name>
        <dbReference type="ChEBI" id="CHEBI:49883"/>
        <label>4</label>
    </ligand>
</feature>
<feature type="binding site" evidence="2">
    <location>
        <position position="133"/>
    </location>
    <ligand>
        <name>[4Fe-4S] cluster</name>
        <dbReference type="ChEBI" id="CHEBI:49883"/>
        <label>4</label>
    </ligand>
</feature>
<feature type="binding site" evidence="2">
    <location>
        <position position="136"/>
    </location>
    <ligand>
        <name>[4Fe-4S] cluster</name>
        <dbReference type="ChEBI" id="CHEBI:49883"/>
        <label>4</label>
    </ligand>
</feature>
<feature type="binding site" evidence="2">
    <location>
        <position position="139"/>
    </location>
    <ligand>
        <name>[4Fe-4S] cluster</name>
        <dbReference type="ChEBI" id="CHEBI:49883"/>
        <label>4</label>
    </ligand>
</feature>
<feature type="binding site" evidence="2">
    <location>
        <position position="143"/>
    </location>
    <ligand>
        <name>[4Fe-4S] cluster</name>
        <dbReference type="ChEBI" id="CHEBI:49883"/>
        <label>3</label>
    </ligand>
</feature>
<feature type="binding site" evidence="2">
    <location>
        <position position="160"/>
    </location>
    <ligand>
        <name>[4Fe-4S] cluster</name>
        <dbReference type="ChEBI" id="CHEBI:49883"/>
        <label>2</label>
    </ligand>
</feature>
<feature type="binding site" evidence="2">
    <location>
        <position position="163"/>
    </location>
    <ligand>
        <name>[4Fe-4S] cluster</name>
        <dbReference type="ChEBI" id="CHEBI:49883"/>
        <label>2</label>
    </ligand>
</feature>
<feature type="binding site" evidence="2">
    <location>
        <position position="175"/>
    </location>
    <ligand>
        <name>[4Fe-4S] cluster</name>
        <dbReference type="ChEBI" id="CHEBI:49883"/>
        <label>2</label>
    </ligand>
</feature>
<feature type="binding site" evidence="2">
    <location>
        <position position="179"/>
    </location>
    <ligand>
        <name>[4Fe-4S] cluster</name>
        <dbReference type="ChEBI" id="CHEBI:49883"/>
        <label>1</label>
    </ligand>
</feature>
<accession>P0AAJ4</accession>
<accession>P24184</accession>
<accession>P77166</accession>